<organism>
    <name type="scientific">Bacillus subtilis (strain 168)</name>
    <dbReference type="NCBI Taxonomy" id="224308"/>
    <lineage>
        <taxon>Bacteria</taxon>
        <taxon>Bacillati</taxon>
        <taxon>Bacillota</taxon>
        <taxon>Bacilli</taxon>
        <taxon>Bacillales</taxon>
        <taxon>Bacillaceae</taxon>
        <taxon>Bacillus</taxon>
    </lineage>
</organism>
<accession>C0SPB1</accession>
<accession>P71074</accession>
<accession>P71075</accession>
<accession>Q08360</accession>
<accession>Q795L0</accession>
<gene>
    <name type="primary">yukJ</name>
    <name type="synonym">yukI</name>
    <name type="synonym">yuxI</name>
    <name type="ordered locus">BSU31945</name>
    <name type="ORF">BSU31940</name>
    <name type="ORF">BSU31950</name>
</gene>
<feature type="chain" id="PRO_0000382899" description="Uncharacterized protein YukJ">
    <location>
        <begin position="1"/>
        <end position="225"/>
    </location>
</feature>
<feature type="sequence conflict" description="In Ref. 4; AAA16039." evidence="1" ref="4">
    <original>FDSGSITILPNMPYGYT</original>
    <variation>LIRLNYHPSEHAYDIQD</variation>
    <location>
        <begin position="62"/>
        <end position="78"/>
    </location>
</feature>
<evidence type="ECO:0000305" key="1"/>
<reference key="1">
    <citation type="journal article" date="1997" name="Microbiology">
        <title>A 12kb nucleotide sequence containing the alanine dehydrogenase gene at 279 degree on the Bacillus subtilis chromosome.</title>
        <authorList>
            <person name="Oudega B."/>
            <person name="Vandenbol M."/>
            <person name="Koningstein G."/>
        </authorList>
    </citation>
    <scope>NUCLEOTIDE SEQUENCE [GENOMIC DNA]</scope>
    <source>
        <strain>168</strain>
    </source>
</reference>
<reference key="2">
    <citation type="journal article" date="1997" name="Nature">
        <title>The complete genome sequence of the Gram-positive bacterium Bacillus subtilis.</title>
        <authorList>
            <person name="Kunst F."/>
            <person name="Ogasawara N."/>
            <person name="Moszer I."/>
            <person name="Albertini A.M."/>
            <person name="Alloni G."/>
            <person name="Azevedo V."/>
            <person name="Bertero M.G."/>
            <person name="Bessieres P."/>
            <person name="Bolotin A."/>
            <person name="Borchert S."/>
            <person name="Borriss R."/>
            <person name="Boursier L."/>
            <person name="Brans A."/>
            <person name="Braun M."/>
            <person name="Brignell S.C."/>
            <person name="Bron S."/>
            <person name="Brouillet S."/>
            <person name="Bruschi C.V."/>
            <person name="Caldwell B."/>
            <person name="Capuano V."/>
            <person name="Carter N.M."/>
            <person name="Choi S.-K."/>
            <person name="Codani J.-J."/>
            <person name="Connerton I.F."/>
            <person name="Cummings N.J."/>
            <person name="Daniel R.A."/>
            <person name="Denizot F."/>
            <person name="Devine K.M."/>
            <person name="Duesterhoeft A."/>
            <person name="Ehrlich S.D."/>
            <person name="Emmerson P.T."/>
            <person name="Entian K.-D."/>
            <person name="Errington J."/>
            <person name="Fabret C."/>
            <person name="Ferrari E."/>
            <person name="Foulger D."/>
            <person name="Fritz C."/>
            <person name="Fujita M."/>
            <person name="Fujita Y."/>
            <person name="Fuma S."/>
            <person name="Galizzi A."/>
            <person name="Galleron N."/>
            <person name="Ghim S.-Y."/>
            <person name="Glaser P."/>
            <person name="Goffeau A."/>
            <person name="Golightly E.J."/>
            <person name="Grandi G."/>
            <person name="Guiseppi G."/>
            <person name="Guy B.J."/>
            <person name="Haga K."/>
            <person name="Haiech J."/>
            <person name="Harwood C.R."/>
            <person name="Henaut A."/>
            <person name="Hilbert H."/>
            <person name="Holsappel S."/>
            <person name="Hosono S."/>
            <person name="Hullo M.-F."/>
            <person name="Itaya M."/>
            <person name="Jones L.-M."/>
            <person name="Joris B."/>
            <person name="Karamata D."/>
            <person name="Kasahara Y."/>
            <person name="Klaerr-Blanchard M."/>
            <person name="Klein C."/>
            <person name="Kobayashi Y."/>
            <person name="Koetter P."/>
            <person name="Koningstein G."/>
            <person name="Krogh S."/>
            <person name="Kumano M."/>
            <person name="Kurita K."/>
            <person name="Lapidus A."/>
            <person name="Lardinois S."/>
            <person name="Lauber J."/>
            <person name="Lazarevic V."/>
            <person name="Lee S.-M."/>
            <person name="Levine A."/>
            <person name="Liu H."/>
            <person name="Masuda S."/>
            <person name="Mauel C."/>
            <person name="Medigue C."/>
            <person name="Medina N."/>
            <person name="Mellado R.P."/>
            <person name="Mizuno M."/>
            <person name="Moestl D."/>
            <person name="Nakai S."/>
            <person name="Noback M."/>
            <person name="Noone D."/>
            <person name="O'Reilly M."/>
            <person name="Ogawa K."/>
            <person name="Ogiwara A."/>
            <person name="Oudega B."/>
            <person name="Park S.-H."/>
            <person name="Parro V."/>
            <person name="Pohl T.M."/>
            <person name="Portetelle D."/>
            <person name="Porwollik S."/>
            <person name="Prescott A.M."/>
            <person name="Presecan E."/>
            <person name="Pujic P."/>
            <person name="Purnelle B."/>
            <person name="Rapoport G."/>
            <person name="Rey M."/>
            <person name="Reynolds S."/>
            <person name="Rieger M."/>
            <person name="Rivolta C."/>
            <person name="Rocha E."/>
            <person name="Roche B."/>
            <person name="Rose M."/>
            <person name="Sadaie Y."/>
            <person name="Sato T."/>
            <person name="Scanlan E."/>
            <person name="Schleich S."/>
            <person name="Schroeter R."/>
            <person name="Scoffone F."/>
            <person name="Sekiguchi J."/>
            <person name="Sekowska A."/>
            <person name="Seror S.J."/>
            <person name="Serror P."/>
            <person name="Shin B.-S."/>
            <person name="Soldo B."/>
            <person name="Sorokin A."/>
            <person name="Tacconi E."/>
            <person name="Takagi T."/>
            <person name="Takahashi H."/>
            <person name="Takemaru K."/>
            <person name="Takeuchi M."/>
            <person name="Tamakoshi A."/>
            <person name="Tanaka T."/>
            <person name="Terpstra P."/>
            <person name="Tognoni A."/>
            <person name="Tosato V."/>
            <person name="Uchiyama S."/>
            <person name="Vandenbol M."/>
            <person name="Vannier F."/>
            <person name="Vassarotti A."/>
            <person name="Viari A."/>
            <person name="Wambutt R."/>
            <person name="Wedler E."/>
            <person name="Wedler H."/>
            <person name="Weitzenegger T."/>
            <person name="Winters P."/>
            <person name="Wipat A."/>
            <person name="Yamamoto H."/>
            <person name="Yamane K."/>
            <person name="Yasumoto K."/>
            <person name="Yata K."/>
            <person name="Yoshida K."/>
            <person name="Yoshikawa H.-F."/>
            <person name="Zumstein E."/>
            <person name="Yoshikawa H."/>
            <person name="Danchin A."/>
        </authorList>
    </citation>
    <scope>NUCLEOTIDE SEQUENCE [LARGE SCALE GENOMIC DNA]</scope>
    <source>
        <strain>168</strain>
    </source>
</reference>
<reference key="3">
    <citation type="journal article" date="2009" name="Microbiology">
        <title>From a consortium sequence to a unified sequence: the Bacillus subtilis 168 reference genome a decade later.</title>
        <authorList>
            <person name="Barbe V."/>
            <person name="Cruveiller S."/>
            <person name="Kunst F."/>
            <person name="Lenoble P."/>
            <person name="Meurice G."/>
            <person name="Sekowska A."/>
            <person name="Vallenet D."/>
            <person name="Wang T."/>
            <person name="Moszer I."/>
            <person name="Medigue C."/>
            <person name="Danchin A."/>
        </authorList>
    </citation>
    <scope>SEQUENCE REVISION</scope>
</reference>
<reference key="4">
    <citation type="journal article" date="1993" name="J. Bacteriol.">
        <title>Alanine dehydrogenase (ald) is required for normal sporulation in Bacillus subtilis.</title>
        <authorList>
            <person name="Siranosian K.J."/>
            <person name="Ireton K."/>
            <person name="Grossman A.D."/>
        </authorList>
    </citation>
    <scope>NUCLEOTIDE SEQUENCE [GENOMIC DNA] OF 1-78</scope>
</reference>
<protein>
    <recommendedName>
        <fullName>Uncharacterized protein YukJ</fullName>
    </recommendedName>
</protein>
<proteinExistence type="predicted"/>
<dbReference type="EMBL" id="Z82015">
    <property type="protein sequence ID" value="CAB04776.1"/>
    <property type="status" value="ALT_FRAME"/>
    <property type="molecule type" value="Genomic_DNA"/>
</dbReference>
<dbReference type="EMBL" id="Z82015">
    <property type="protein sequence ID" value="CAB04777.1"/>
    <property type="status" value="ALT_FRAME"/>
    <property type="molecule type" value="Genomic_DNA"/>
</dbReference>
<dbReference type="EMBL" id="AL009126">
    <property type="protein sequence ID" value="CAB15183.2"/>
    <property type="molecule type" value="Genomic_DNA"/>
</dbReference>
<dbReference type="EMBL" id="L20916">
    <property type="protein sequence ID" value="AAA16039.1"/>
    <property type="molecule type" value="Genomic_DNA"/>
</dbReference>
<dbReference type="PIR" id="B70025">
    <property type="entry name" value="B70025"/>
</dbReference>
<dbReference type="RefSeq" id="NP_391073.2">
    <property type="nucleotide sequence ID" value="NC_000964.3"/>
</dbReference>
<dbReference type="RefSeq" id="WP_003242737.1">
    <property type="nucleotide sequence ID" value="NZ_OZ025638.1"/>
</dbReference>
<dbReference type="FunCoup" id="C0SPB1">
    <property type="interactions" value="35"/>
</dbReference>
<dbReference type="STRING" id="224308.BSU31945"/>
<dbReference type="jPOST" id="C0SPB1"/>
<dbReference type="PaxDb" id="224308-BSU31945"/>
<dbReference type="EnsemblBacteria" id="CAB15183">
    <property type="protein sequence ID" value="CAB15183"/>
    <property type="gene ID" value="BSU_31945"/>
</dbReference>
<dbReference type="GeneID" id="937111"/>
<dbReference type="KEGG" id="bsu:BSU31945"/>
<dbReference type="PATRIC" id="fig|224308.179.peg.3460"/>
<dbReference type="eggNOG" id="COG5634">
    <property type="taxonomic scope" value="Bacteria"/>
</dbReference>
<dbReference type="InParanoid" id="C0SPB1"/>
<dbReference type="OrthoDB" id="291334at2"/>
<dbReference type="BioCyc" id="BSUB:BSU31945-MONOMER"/>
<dbReference type="Proteomes" id="UP000001570">
    <property type="component" value="Chromosome"/>
</dbReference>
<dbReference type="InterPro" id="IPR019268">
    <property type="entry name" value="DUF2278"/>
</dbReference>
<dbReference type="Pfam" id="PF10042">
    <property type="entry name" value="DUF2278"/>
    <property type="match status" value="1"/>
</dbReference>
<keyword id="KW-1185">Reference proteome</keyword>
<comment type="sequence caution" evidence="1">
    <conflict type="frameshift">
        <sequence resource="EMBL-CDS" id="CAB04776"/>
    </conflict>
</comment>
<comment type="sequence caution" evidence="1">
    <conflict type="frameshift">
        <sequence resource="EMBL-CDS" id="CAB04777"/>
    </conflict>
</comment>
<name>YUKJ_BACSU</name>
<sequence>MAVQQYGVLKGIVLDMKRETDDDSPHFQVKMLGEENTYYRCAINVMSSSEESEVLYLADDQFDSGSITILPNMPYGYTRINEANREVALDYVRGNLFDPREMKPLPHEITGPDNDLNDFIETYMKKAQDEKTPVYIFGSKFGPEQAADKIFGFTPTNGMHNIHMNQGNAMDTRWKKDNGSWHDGGILIQFADQWAAVFLAFLSQSWCTDENGNPVRDCDHTQTSA</sequence>